<comment type="function">
    <text evidence="1">Peptide chain release factor 1 directs the termination of translation in response to the peptide chain termination codons UAG and UAA.</text>
</comment>
<comment type="subcellular location">
    <subcellularLocation>
        <location evidence="1">Cytoplasm</location>
    </subcellularLocation>
</comment>
<comment type="PTM">
    <text evidence="1">Methylated by PrmC. Methylation increases the termination efficiency of RF1.</text>
</comment>
<comment type="similarity">
    <text evidence="1">Belongs to the prokaryotic/mitochondrial release factor family.</text>
</comment>
<sequence length="364" mass="40966">MEYTTLIARLKNASESFVNLEMQLADPDIANNPKKLESIARERAKLEPLVLDFNQLLDTDKEIGDSKQLLKENRNDKDMESLINEELFSLEDLKNQLIEKLTIALLPKDPRDERSVMLEIRAGAGGNEACIWAGDLARMYERYGQKIGWTVKPISASESDMGGFKELVISVKGDSVYSQLKFEAGVHRVQRVPATESQGRVHTSTATVAVMPEADPVEVKIDPTEIEIGTARSGGAGGQNVNKVETAIDLIHKPTGIRVFCTQERSQLQNRERAMEILRAKLYEIQLKEANAKERSQRLMQVGSGDRSEKIRTYNFKDNRTTDHRLGSNFALEPILAGQLDDVIYACLAQEQKRMLEDFNENEN</sequence>
<evidence type="ECO:0000255" key="1">
    <source>
        <dbReference type="HAMAP-Rule" id="MF_00093"/>
    </source>
</evidence>
<gene>
    <name evidence="1" type="primary">prfA</name>
    <name type="ordered locus">PMM1529</name>
</gene>
<name>RF1_PROMP</name>
<dbReference type="EMBL" id="BX548174">
    <property type="protein sequence ID" value="CAE19988.1"/>
    <property type="molecule type" value="Genomic_DNA"/>
</dbReference>
<dbReference type="RefSeq" id="WP_011133157.1">
    <property type="nucleotide sequence ID" value="NC_005072.1"/>
</dbReference>
<dbReference type="SMR" id="Q7UZX1"/>
<dbReference type="STRING" id="59919.PMM1529"/>
<dbReference type="KEGG" id="pmm:PMM1529"/>
<dbReference type="eggNOG" id="COG0216">
    <property type="taxonomic scope" value="Bacteria"/>
</dbReference>
<dbReference type="HOGENOM" id="CLU_036856_0_1_3"/>
<dbReference type="OrthoDB" id="9806673at2"/>
<dbReference type="Proteomes" id="UP000001026">
    <property type="component" value="Chromosome"/>
</dbReference>
<dbReference type="GO" id="GO:0005737">
    <property type="term" value="C:cytoplasm"/>
    <property type="evidence" value="ECO:0007669"/>
    <property type="project" value="UniProtKB-SubCell"/>
</dbReference>
<dbReference type="GO" id="GO:0016149">
    <property type="term" value="F:translation release factor activity, codon specific"/>
    <property type="evidence" value="ECO:0007669"/>
    <property type="project" value="UniProtKB-UniRule"/>
</dbReference>
<dbReference type="FunFam" id="3.30.160.20:FF:000004">
    <property type="entry name" value="Peptide chain release factor 1"/>
    <property type="match status" value="1"/>
</dbReference>
<dbReference type="FunFam" id="3.30.70.1660:FF:000002">
    <property type="entry name" value="Peptide chain release factor 1"/>
    <property type="match status" value="1"/>
</dbReference>
<dbReference type="Gene3D" id="3.30.160.20">
    <property type="match status" value="1"/>
</dbReference>
<dbReference type="Gene3D" id="3.30.70.1660">
    <property type="match status" value="1"/>
</dbReference>
<dbReference type="Gene3D" id="6.10.140.1950">
    <property type="match status" value="1"/>
</dbReference>
<dbReference type="HAMAP" id="MF_00093">
    <property type="entry name" value="Rel_fac_1"/>
    <property type="match status" value="1"/>
</dbReference>
<dbReference type="InterPro" id="IPR005139">
    <property type="entry name" value="PCRF"/>
</dbReference>
<dbReference type="InterPro" id="IPR000352">
    <property type="entry name" value="Pep_chain_release_fac_I"/>
</dbReference>
<dbReference type="InterPro" id="IPR045853">
    <property type="entry name" value="Pep_chain_release_fac_I_sf"/>
</dbReference>
<dbReference type="InterPro" id="IPR050057">
    <property type="entry name" value="Prokaryotic/Mito_RF"/>
</dbReference>
<dbReference type="InterPro" id="IPR004373">
    <property type="entry name" value="RF-1"/>
</dbReference>
<dbReference type="NCBIfam" id="TIGR00019">
    <property type="entry name" value="prfA"/>
    <property type="match status" value="1"/>
</dbReference>
<dbReference type="NCBIfam" id="NF001859">
    <property type="entry name" value="PRK00591.1"/>
    <property type="match status" value="1"/>
</dbReference>
<dbReference type="PANTHER" id="PTHR43804">
    <property type="entry name" value="LD18447P"/>
    <property type="match status" value="1"/>
</dbReference>
<dbReference type="PANTHER" id="PTHR43804:SF8">
    <property type="entry name" value="PEPTIDE CHAIN RELEASE FACTOR APG3, CHLOROPLASTIC"/>
    <property type="match status" value="1"/>
</dbReference>
<dbReference type="Pfam" id="PF03462">
    <property type="entry name" value="PCRF"/>
    <property type="match status" value="1"/>
</dbReference>
<dbReference type="Pfam" id="PF00472">
    <property type="entry name" value="RF-1"/>
    <property type="match status" value="1"/>
</dbReference>
<dbReference type="SMART" id="SM00937">
    <property type="entry name" value="PCRF"/>
    <property type="match status" value="1"/>
</dbReference>
<dbReference type="SUPFAM" id="SSF75620">
    <property type="entry name" value="Release factor"/>
    <property type="match status" value="1"/>
</dbReference>
<dbReference type="PROSITE" id="PS00745">
    <property type="entry name" value="RF_PROK_I"/>
    <property type="match status" value="1"/>
</dbReference>
<organism>
    <name type="scientific">Prochlorococcus marinus subsp. pastoris (strain CCMP1986 / NIES-2087 / MED4)</name>
    <dbReference type="NCBI Taxonomy" id="59919"/>
    <lineage>
        <taxon>Bacteria</taxon>
        <taxon>Bacillati</taxon>
        <taxon>Cyanobacteriota</taxon>
        <taxon>Cyanophyceae</taxon>
        <taxon>Synechococcales</taxon>
        <taxon>Prochlorococcaceae</taxon>
        <taxon>Prochlorococcus</taxon>
    </lineage>
</organism>
<feature type="chain" id="PRO_0000263318" description="Peptide chain release factor 1">
    <location>
        <begin position="1"/>
        <end position="364"/>
    </location>
</feature>
<feature type="modified residue" description="N5-methylglutamine" evidence="1">
    <location>
        <position position="239"/>
    </location>
</feature>
<accession>Q7UZX1</accession>
<keyword id="KW-0963">Cytoplasm</keyword>
<keyword id="KW-0488">Methylation</keyword>
<keyword id="KW-0648">Protein biosynthesis</keyword>
<protein>
    <recommendedName>
        <fullName evidence="1">Peptide chain release factor 1</fullName>
        <shortName evidence="1">RF-1</shortName>
    </recommendedName>
</protein>
<proteinExistence type="inferred from homology"/>
<reference key="1">
    <citation type="journal article" date="2003" name="Nature">
        <title>Genome divergence in two Prochlorococcus ecotypes reflects oceanic niche differentiation.</title>
        <authorList>
            <person name="Rocap G."/>
            <person name="Larimer F.W."/>
            <person name="Lamerdin J.E."/>
            <person name="Malfatti S."/>
            <person name="Chain P."/>
            <person name="Ahlgren N.A."/>
            <person name="Arellano A."/>
            <person name="Coleman M."/>
            <person name="Hauser L."/>
            <person name="Hess W.R."/>
            <person name="Johnson Z.I."/>
            <person name="Land M.L."/>
            <person name="Lindell D."/>
            <person name="Post A.F."/>
            <person name="Regala W."/>
            <person name="Shah M."/>
            <person name="Shaw S.L."/>
            <person name="Steglich C."/>
            <person name="Sullivan M.B."/>
            <person name="Ting C.S."/>
            <person name="Tolonen A."/>
            <person name="Webb E.A."/>
            <person name="Zinser E.R."/>
            <person name="Chisholm S.W."/>
        </authorList>
    </citation>
    <scope>NUCLEOTIDE SEQUENCE [LARGE SCALE GENOMIC DNA]</scope>
    <source>
        <strain>CCMP1986 / NIES-2087 / MED4</strain>
    </source>
</reference>